<evidence type="ECO:0000250" key="1"/>
<evidence type="ECO:0000255" key="2">
    <source>
        <dbReference type="HAMAP-Rule" id="MF_01025"/>
    </source>
</evidence>
<gene>
    <name evidence="2" type="primary">leuA</name>
    <name type="ordered locus">Z0083</name>
    <name type="ordered locus">ECs0078</name>
</gene>
<accession>Q8X9Z8</accession>
<proteinExistence type="inferred from homology"/>
<feature type="initiator methionine" description="Removed" evidence="1">
    <location>
        <position position="1"/>
    </location>
</feature>
<feature type="chain" id="PRO_0000140353" description="2-isopropylmalate synthase">
    <location>
        <begin position="2"/>
        <end position="523"/>
    </location>
</feature>
<feature type="domain" description="Pyruvate carboxyltransferase" evidence="2">
    <location>
        <begin position="5"/>
        <end position="267"/>
    </location>
</feature>
<feature type="region of interest" description="Regulatory domain" evidence="2">
    <location>
        <begin position="392"/>
        <end position="523"/>
    </location>
</feature>
<feature type="binding site" evidence="2">
    <location>
        <position position="14"/>
    </location>
    <ligand>
        <name>Mn(2+)</name>
        <dbReference type="ChEBI" id="CHEBI:29035"/>
    </ligand>
</feature>
<feature type="binding site" evidence="2">
    <location>
        <position position="202"/>
    </location>
    <ligand>
        <name>Mn(2+)</name>
        <dbReference type="ChEBI" id="CHEBI:29035"/>
    </ligand>
</feature>
<feature type="binding site" evidence="2">
    <location>
        <position position="204"/>
    </location>
    <ligand>
        <name>Mn(2+)</name>
        <dbReference type="ChEBI" id="CHEBI:29035"/>
    </ligand>
</feature>
<feature type="binding site" evidence="2">
    <location>
        <position position="238"/>
    </location>
    <ligand>
        <name>Mn(2+)</name>
        <dbReference type="ChEBI" id="CHEBI:29035"/>
    </ligand>
</feature>
<keyword id="KW-0028">Amino-acid biosynthesis</keyword>
<keyword id="KW-0100">Branched-chain amino acid biosynthesis</keyword>
<keyword id="KW-0963">Cytoplasm</keyword>
<keyword id="KW-0432">Leucine biosynthesis</keyword>
<keyword id="KW-0464">Manganese</keyword>
<keyword id="KW-0479">Metal-binding</keyword>
<keyword id="KW-1185">Reference proteome</keyword>
<keyword id="KW-0808">Transferase</keyword>
<comment type="function">
    <text evidence="2">Catalyzes the condensation of the acetyl group of acetyl-CoA with 3-methyl-2-oxobutanoate (2-ketoisovalerate) to form 3-carboxy-3-hydroxy-4-methylpentanoate (2-isopropylmalate).</text>
</comment>
<comment type="catalytic activity">
    <reaction evidence="2">
        <text>3-methyl-2-oxobutanoate + acetyl-CoA + H2O = (2S)-2-isopropylmalate + CoA + H(+)</text>
        <dbReference type="Rhea" id="RHEA:21524"/>
        <dbReference type="ChEBI" id="CHEBI:1178"/>
        <dbReference type="ChEBI" id="CHEBI:11851"/>
        <dbReference type="ChEBI" id="CHEBI:15377"/>
        <dbReference type="ChEBI" id="CHEBI:15378"/>
        <dbReference type="ChEBI" id="CHEBI:57287"/>
        <dbReference type="ChEBI" id="CHEBI:57288"/>
        <dbReference type="EC" id="2.3.3.13"/>
    </reaction>
</comment>
<comment type="cofactor">
    <cofactor evidence="2">
        <name>Mn(2+)</name>
        <dbReference type="ChEBI" id="CHEBI:29035"/>
    </cofactor>
</comment>
<comment type="pathway">
    <text evidence="2">Amino-acid biosynthesis; L-leucine biosynthesis; L-leucine from 3-methyl-2-oxobutanoate: step 1/4.</text>
</comment>
<comment type="subunit">
    <text evidence="2">Homodimer.</text>
</comment>
<comment type="subcellular location">
    <subcellularLocation>
        <location evidence="2">Cytoplasm</location>
    </subcellularLocation>
</comment>
<comment type="similarity">
    <text evidence="2">Belongs to the alpha-IPM synthase/homocitrate synthase family. LeuA type 1 subfamily.</text>
</comment>
<reference key="1">
    <citation type="journal article" date="2001" name="Nature">
        <title>Genome sequence of enterohaemorrhagic Escherichia coli O157:H7.</title>
        <authorList>
            <person name="Perna N.T."/>
            <person name="Plunkett G. III"/>
            <person name="Burland V."/>
            <person name="Mau B."/>
            <person name="Glasner J.D."/>
            <person name="Rose D.J."/>
            <person name="Mayhew G.F."/>
            <person name="Evans P.S."/>
            <person name="Gregor J."/>
            <person name="Kirkpatrick H.A."/>
            <person name="Posfai G."/>
            <person name="Hackett J."/>
            <person name="Klink S."/>
            <person name="Boutin A."/>
            <person name="Shao Y."/>
            <person name="Miller L."/>
            <person name="Grotbeck E.J."/>
            <person name="Davis N.W."/>
            <person name="Lim A."/>
            <person name="Dimalanta E.T."/>
            <person name="Potamousis K."/>
            <person name="Apodaca J."/>
            <person name="Anantharaman T.S."/>
            <person name="Lin J."/>
            <person name="Yen G."/>
            <person name="Schwartz D.C."/>
            <person name="Welch R.A."/>
            <person name="Blattner F.R."/>
        </authorList>
    </citation>
    <scope>NUCLEOTIDE SEQUENCE [LARGE SCALE GENOMIC DNA]</scope>
    <source>
        <strain>O157:H7 / EDL933 / ATCC 700927 / EHEC</strain>
    </source>
</reference>
<reference key="2">
    <citation type="journal article" date="2001" name="DNA Res.">
        <title>Complete genome sequence of enterohemorrhagic Escherichia coli O157:H7 and genomic comparison with a laboratory strain K-12.</title>
        <authorList>
            <person name="Hayashi T."/>
            <person name="Makino K."/>
            <person name="Ohnishi M."/>
            <person name="Kurokawa K."/>
            <person name="Ishii K."/>
            <person name="Yokoyama K."/>
            <person name="Han C.-G."/>
            <person name="Ohtsubo E."/>
            <person name="Nakayama K."/>
            <person name="Murata T."/>
            <person name="Tanaka M."/>
            <person name="Tobe T."/>
            <person name="Iida T."/>
            <person name="Takami H."/>
            <person name="Honda T."/>
            <person name="Sasakawa C."/>
            <person name="Ogasawara N."/>
            <person name="Yasunaga T."/>
            <person name="Kuhara S."/>
            <person name="Shiba T."/>
            <person name="Hattori M."/>
            <person name="Shinagawa H."/>
        </authorList>
    </citation>
    <scope>NUCLEOTIDE SEQUENCE [LARGE SCALE GENOMIC DNA]</scope>
    <source>
        <strain>O157:H7 / Sakai / RIMD 0509952 / EHEC</strain>
    </source>
</reference>
<organism>
    <name type="scientific">Escherichia coli O157:H7</name>
    <dbReference type="NCBI Taxonomy" id="83334"/>
    <lineage>
        <taxon>Bacteria</taxon>
        <taxon>Pseudomonadati</taxon>
        <taxon>Pseudomonadota</taxon>
        <taxon>Gammaproteobacteria</taxon>
        <taxon>Enterobacterales</taxon>
        <taxon>Enterobacteriaceae</taxon>
        <taxon>Escherichia</taxon>
    </lineage>
</organism>
<protein>
    <recommendedName>
        <fullName evidence="2">2-isopropylmalate synthase</fullName>
        <ecNumber evidence="2">2.3.3.13</ecNumber>
    </recommendedName>
    <alternativeName>
        <fullName evidence="2">Alpha-IPM synthase</fullName>
    </alternativeName>
    <alternativeName>
        <fullName evidence="2">Alpha-isopropylmalate synthase</fullName>
    </alternativeName>
</protein>
<dbReference type="EC" id="2.3.3.13" evidence="2"/>
<dbReference type="EMBL" id="AE005174">
    <property type="protein sequence ID" value="AAG54378.1"/>
    <property type="molecule type" value="Genomic_DNA"/>
</dbReference>
<dbReference type="EMBL" id="BA000007">
    <property type="protein sequence ID" value="BAB33501.1"/>
    <property type="molecule type" value="Genomic_DNA"/>
</dbReference>
<dbReference type="PIR" id="F85489">
    <property type="entry name" value="F85489"/>
</dbReference>
<dbReference type="PIR" id="F90638">
    <property type="entry name" value="F90638"/>
</dbReference>
<dbReference type="RefSeq" id="NP_308105.1">
    <property type="nucleotide sequence ID" value="NC_002695.1"/>
</dbReference>
<dbReference type="RefSeq" id="WP_000082847.1">
    <property type="nucleotide sequence ID" value="NZ_VOAI01000002.1"/>
</dbReference>
<dbReference type="SMR" id="Q8X9Z8"/>
<dbReference type="STRING" id="155864.Z0083"/>
<dbReference type="GeneID" id="75169974"/>
<dbReference type="GeneID" id="913513"/>
<dbReference type="KEGG" id="ece:Z0083"/>
<dbReference type="KEGG" id="ecs:ECs_0078"/>
<dbReference type="PATRIC" id="fig|386585.9.peg.178"/>
<dbReference type="eggNOG" id="COG0119">
    <property type="taxonomic scope" value="Bacteria"/>
</dbReference>
<dbReference type="HOGENOM" id="CLU_022158_0_1_6"/>
<dbReference type="OMA" id="NTMRMLV"/>
<dbReference type="UniPathway" id="UPA00048">
    <property type="reaction ID" value="UER00070"/>
</dbReference>
<dbReference type="Proteomes" id="UP000000558">
    <property type="component" value="Chromosome"/>
</dbReference>
<dbReference type="Proteomes" id="UP000002519">
    <property type="component" value="Chromosome"/>
</dbReference>
<dbReference type="GO" id="GO:0005829">
    <property type="term" value="C:cytosol"/>
    <property type="evidence" value="ECO:0007669"/>
    <property type="project" value="TreeGrafter"/>
</dbReference>
<dbReference type="GO" id="GO:0003852">
    <property type="term" value="F:2-isopropylmalate synthase activity"/>
    <property type="evidence" value="ECO:0007669"/>
    <property type="project" value="UniProtKB-UniRule"/>
</dbReference>
<dbReference type="GO" id="GO:0003985">
    <property type="term" value="F:acetyl-CoA C-acetyltransferase activity"/>
    <property type="evidence" value="ECO:0007669"/>
    <property type="project" value="UniProtKB-UniRule"/>
</dbReference>
<dbReference type="GO" id="GO:0030145">
    <property type="term" value="F:manganese ion binding"/>
    <property type="evidence" value="ECO:0007669"/>
    <property type="project" value="UniProtKB-UniRule"/>
</dbReference>
<dbReference type="GO" id="GO:0009098">
    <property type="term" value="P:L-leucine biosynthetic process"/>
    <property type="evidence" value="ECO:0007669"/>
    <property type="project" value="UniProtKB-UniRule"/>
</dbReference>
<dbReference type="CDD" id="cd07940">
    <property type="entry name" value="DRE_TIM_IPMS"/>
    <property type="match status" value="1"/>
</dbReference>
<dbReference type="FunFam" id="1.10.238.260:FF:000001">
    <property type="entry name" value="2-isopropylmalate synthase"/>
    <property type="match status" value="1"/>
</dbReference>
<dbReference type="FunFam" id="3.20.20.70:FF:000010">
    <property type="entry name" value="2-isopropylmalate synthase"/>
    <property type="match status" value="1"/>
</dbReference>
<dbReference type="FunFam" id="3.30.160.270:FF:000001">
    <property type="entry name" value="2-isopropylmalate synthase"/>
    <property type="match status" value="1"/>
</dbReference>
<dbReference type="Gene3D" id="1.10.238.260">
    <property type="match status" value="1"/>
</dbReference>
<dbReference type="Gene3D" id="3.30.160.270">
    <property type="match status" value="1"/>
</dbReference>
<dbReference type="Gene3D" id="3.20.20.70">
    <property type="entry name" value="Aldolase class I"/>
    <property type="match status" value="1"/>
</dbReference>
<dbReference type="HAMAP" id="MF_01025">
    <property type="entry name" value="LeuA_type1"/>
    <property type="match status" value="1"/>
</dbReference>
<dbReference type="InterPro" id="IPR050073">
    <property type="entry name" value="2-IPM_HCS-like"/>
</dbReference>
<dbReference type="InterPro" id="IPR013709">
    <property type="entry name" value="2-isopropylmalate_synth_dimer"/>
</dbReference>
<dbReference type="InterPro" id="IPR002034">
    <property type="entry name" value="AIPM/Hcit_synth_CS"/>
</dbReference>
<dbReference type="InterPro" id="IPR013785">
    <property type="entry name" value="Aldolase_TIM"/>
</dbReference>
<dbReference type="InterPro" id="IPR054691">
    <property type="entry name" value="LeuA/HCS_post-cat"/>
</dbReference>
<dbReference type="InterPro" id="IPR036230">
    <property type="entry name" value="LeuA_allosteric_dom_sf"/>
</dbReference>
<dbReference type="InterPro" id="IPR005671">
    <property type="entry name" value="LeuA_bact_synth"/>
</dbReference>
<dbReference type="InterPro" id="IPR000891">
    <property type="entry name" value="PYR_CT"/>
</dbReference>
<dbReference type="NCBIfam" id="TIGR00973">
    <property type="entry name" value="leuA_bact"/>
    <property type="match status" value="1"/>
</dbReference>
<dbReference type="NCBIfam" id="NF002084">
    <property type="entry name" value="PRK00915.1-1"/>
    <property type="match status" value="1"/>
</dbReference>
<dbReference type="NCBIfam" id="NF002086">
    <property type="entry name" value="PRK00915.1-3"/>
    <property type="match status" value="1"/>
</dbReference>
<dbReference type="PANTHER" id="PTHR10277:SF9">
    <property type="entry name" value="2-ISOPROPYLMALATE SYNTHASE 1, CHLOROPLASTIC-RELATED"/>
    <property type="match status" value="1"/>
</dbReference>
<dbReference type="PANTHER" id="PTHR10277">
    <property type="entry name" value="HOMOCITRATE SYNTHASE-RELATED"/>
    <property type="match status" value="1"/>
</dbReference>
<dbReference type="Pfam" id="PF22617">
    <property type="entry name" value="HCS_D2"/>
    <property type="match status" value="1"/>
</dbReference>
<dbReference type="Pfam" id="PF00682">
    <property type="entry name" value="HMGL-like"/>
    <property type="match status" value="1"/>
</dbReference>
<dbReference type="Pfam" id="PF08502">
    <property type="entry name" value="LeuA_dimer"/>
    <property type="match status" value="1"/>
</dbReference>
<dbReference type="SMART" id="SM00917">
    <property type="entry name" value="LeuA_dimer"/>
    <property type="match status" value="1"/>
</dbReference>
<dbReference type="SUPFAM" id="SSF110921">
    <property type="entry name" value="2-isopropylmalate synthase LeuA, allosteric (dimerisation) domain"/>
    <property type="match status" value="1"/>
</dbReference>
<dbReference type="SUPFAM" id="SSF51569">
    <property type="entry name" value="Aldolase"/>
    <property type="match status" value="1"/>
</dbReference>
<dbReference type="PROSITE" id="PS00815">
    <property type="entry name" value="AIPM_HOMOCIT_SYNTH_1"/>
    <property type="match status" value="1"/>
</dbReference>
<dbReference type="PROSITE" id="PS00816">
    <property type="entry name" value="AIPM_HOMOCIT_SYNTH_2"/>
    <property type="match status" value="1"/>
</dbReference>
<dbReference type="PROSITE" id="PS50991">
    <property type="entry name" value="PYR_CT"/>
    <property type="match status" value="1"/>
</dbReference>
<name>LEU1_ECO57</name>
<sequence length="523" mass="57314">MSQQVIIFDTTLRDGEQALQASLSVKEKLQIALALERMGVDVMEVGFPVSSPGDFESVQTIARQVKNSRVCALARCVEKDIDVAAESLKVAEAFRIHTFIATSPMHIATKLRSTLDEVIERAIYMVKRARNYTDDVEFSCEDAGRTPIADLARVVEAAINAGATTINIPDTVGYTMPFEFAGIISGLYERVPNIDKAIISVHTHDDLGLAVGNSLAAVHAGARQVEGAMNGIGERAGNCSLEEVIMAIKVRKDILNVHTAINHQEIWRTSQLVSQICNMPIPANKAIVGSGAFAHSSGIHQDGVLKNRENYEIMTPESIGLNQIQLNLTSRSGRAAVKHRMDEMGYKESEYNLDNLYDAFLKLADKKGQVFDYDLEALAFIGKQQEEPEHFRLDYFSVQSGSNDIATAAVKLACGEEVKAEAANGNGPVDAVYQAINRITDYNVELVKYSLTAKGHGKDALGQVDIVANYNGRRFHGVGLATDIVESSAKAMVHVLNNIWRATEVEKELQRKAQHNENNKETV</sequence>